<protein>
    <recommendedName>
        <fullName>Inositol-trisphosphate 3-kinase A</fullName>
        <ecNumber evidence="2">2.7.1.127</ecNumber>
    </recommendedName>
    <alternativeName>
        <fullName>Inositol 1,4,5-trisphosphate 3-kinase A</fullName>
        <shortName>IP3 3-kinase A</shortName>
        <shortName>IP3K A</shortName>
        <shortName>InsP 3-kinase A</shortName>
    </alternativeName>
</protein>
<comment type="function">
    <text evidence="2">Catalyzes the phosphorylation of 1D-myo-inositol 1,4,5-trisphosphate (InsP3) into 1D-myo-inositol 1,3,4,5-tetrakisphosphate and participates to the regulation of calcium homeostasis.</text>
</comment>
<comment type="catalytic activity">
    <reaction evidence="2">
        <text>1D-myo-inositol 1,4,5-trisphosphate + ATP = 1D-myo-inositol 1,3,4,5-tetrakisphosphate + ADP + H(+)</text>
        <dbReference type="Rhea" id="RHEA:11020"/>
        <dbReference type="ChEBI" id="CHEBI:15378"/>
        <dbReference type="ChEBI" id="CHEBI:30616"/>
        <dbReference type="ChEBI" id="CHEBI:57895"/>
        <dbReference type="ChEBI" id="CHEBI:203600"/>
        <dbReference type="ChEBI" id="CHEBI:456216"/>
        <dbReference type="EC" id="2.7.1.127"/>
    </reaction>
    <physiologicalReaction direction="left-to-right" evidence="2">
        <dbReference type="Rhea" id="RHEA:11021"/>
    </physiologicalReaction>
</comment>
<comment type="activity regulation">
    <text evidence="2">Activated by calcium/calmodulin.</text>
</comment>
<comment type="subcellular location">
    <subcellularLocation>
        <location evidence="2">Cytoplasm</location>
        <location evidence="2">Cytoskeleton</location>
    </subcellularLocation>
</comment>
<comment type="similarity">
    <text evidence="4">Belongs to the inositol phosphokinase (IPK) family.</text>
</comment>
<evidence type="ECO:0000250" key="1"/>
<evidence type="ECO:0000250" key="2">
    <source>
        <dbReference type="UniProtKB" id="P23677"/>
    </source>
</evidence>
<evidence type="ECO:0000256" key="3">
    <source>
        <dbReference type="SAM" id="MobiDB-lite"/>
    </source>
</evidence>
<evidence type="ECO:0000305" key="4"/>
<evidence type="ECO:0000312" key="5">
    <source>
        <dbReference type="MGI" id="MGI:1333822"/>
    </source>
</evidence>
<evidence type="ECO:0007744" key="6">
    <source>
    </source>
</evidence>
<evidence type="ECO:0007744" key="7">
    <source>
    </source>
</evidence>
<gene>
    <name evidence="5" type="primary">Itpka</name>
</gene>
<dbReference type="EC" id="2.7.1.127" evidence="2"/>
<dbReference type="EMBL" id="AL844536">
    <property type="status" value="NOT_ANNOTATED_CDS"/>
    <property type="molecule type" value="Genomic_DNA"/>
</dbReference>
<dbReference type="EMBL" id="BC027291">
    <property type="protein sequence ID" value="AAH27291.1"/>
    <property type="molecule type" value="mRNA"/>
</dbReference>
<dbReference type="CCDS" id="CCDS16607.1"/>
<dbReference type="RefSeq" id="NP_666237.1">
    <property type="nucleotide sequence ID" value="NM_146125.2"/>
</dbReference>
<dbReference type="SMR" id="Q8R071"/>
<dbReference type="BioGRID" id="230741">
    <property type="interactions" value="6"/>
</dbReference>
<dbReference type="FunCoup" id="Q8R071">
    <property type="interactions" value="606"/>
</dbReference>
<dbReference type="IntAct" id="Q8R071">
    <property type="interactions" value="4"/>
</dbReference>
<dbReference type="MINT" id="Q8R071"/>
<dbReference type="STRING" id="10090.ENSMUSP00000028758"/>
<dbReference type="GlyGen" id="Q8R071">
    <property type="glycosylation" value="1 site, 1 O-linked glycan (1 site)"/>
</dbReference>
<dbReference type="iPTMnet" id="Q8R071"/>
<dbReference type="PhosphoSitePlus" id="Q8R071"/>
<dbReference type="SwissPalm" id="Q8R071"/>
<dbReference type="jPOST" id="Q8R071"/>
<dbReference type="PaxDb" id="10090-ENSMUSP00000028758"/>
<dbReference type="PeptideAtlas" id="Q8R071"/>
<dbReference type="ProteomicsDB" id="267148"/>
<dbReference type="Antibodypedia" id="23312">
    <property type="antibodies" value="196 antibodies from 28 providers"/>
</dbReference>
<dbReference type="DNASU" id="228550"/>
<dbReference type="Ensembl" id="ENSMUST00000028758.8">
    <property type="protein sequence ID" value="ENSMUSP00000028758.8"/>
    <property type="gene ID" value="ENSMUSG00000027296.8"/>
</dbReference>
<dbReference type="GeneID" id="228550"/>
<dbReference type="KEGG" id="mmu:228550"/>
<dbReference type="UCSC" id="uc008luf.1">
    <property type="organism name" value="mouse"/>
</dbReference>
<dbReference type="AGR" id="MGI:1333822"/>
<dbReference type="CTD" id="3706"/>
<dbReference type="MGI" id="MGI:1333822">
    <property type="gene designation" value="Itpka"/>
</dbReference>
<dbReference type="VEuPathDB" id="HostDB:ENSMUSG00000027296"/>
<dbReference type="eggNOG" id="KOG1621">
    <property type="taxonomic scope" value="Eukaryota"/>
</dbReference>
<dbReference type="GeneTree" id="ENSGT00940000161350"/>
<dbReference type="HOGENOM" id="CLU_017767_1_1_1"/>
<dbReference type="InParanoid" id="Q8R071"/>
<dbReference type="OMA" id="FQVFVEF"/>
<dbReference type="OrthoDB" id="338650at2759"/>
<dbReference type="PhylomeDB" id="Q8R071"/>
<dbReference type="TreeFam" id="TF318394"/>
<dbReference type="BRENDA" id="2.7.1.127">
    <property type="organism ID" value="3474"/>
</dbReference>
<dbReference type="Reactome" id="R-MMU-1855204">
    <property type="pathway name" value="Synthesis of IP3 and IP4 in the cytosol"/>
</dbReference>
<dbReference type="BioGRID-ORCS" id="228550">
    <property type="hits" value="4 hits in 80 CRISPR screens"/>
</dbReference>
<dbReference type="CD-CODE" id="CE726F99">
    <property type="entry name" value="Postsynaptic density"/>
</dbReference>
<dbReference type="PRO" id="PR:Q8R071"/>
<dbReference type="Proteomes" id="UP000000589">
    <property type="component" value="Chromosome 2"/>
</dbReference>
<dbReference type="RNAct" id="Q8R071">
    <property type="molecule type" value="protein"/>
</dbReference>
<dbReference type="Bgee" id="ENSMUSG00000027296">
    <property type="expression patterns" value="Expressed in CA1 field of hippocampus and 128 other cell types or tissues"/>
</dbReference>
<dbReference type="GO" id="GO:0005737">
    <property type="term" value="C:cytoplasm"/>
    <property type="evidence" value="ECO:0007669"/>
    <property type="project" value="UniProtKB-KW"/>
</dbReference>
<dbReference type="GO" id="GO:0005856">
    <property type="term" value="C:cytoskeleton"/>
    <property type="evidence" value="ECO:0000250"/>
    <property type="project" value="UniProtKB"/>
</dbReference>
<dbReference type="GO" id="GO:0043197">
    <property type="term" value="C:dendritic spine"/>
    <property type="evidence" value="ECO:0000266"/>
    <property type="project" value="MGI"/>
</dbReference>
<dbReference type="GO" id="GO:0098978">
    <property type="term" value="C:glutamatergic synapse"/>
    <property type="evidence" value="ECO:0007669"/>
    <property type="project" value="Ensembl"/>
</dbReference>
<dbReference type="GO" id="GO:0098871">
    <property type="term" value="C:postsynaptic actin cytoskeleton"/>
    <property type="evidence" value="ECO:0007669"/>
    <property type="project" value="Ensembl"/>
</dbReference>
<dbReference type="GO" id="GO:0005524">
    <property type="term" value="F:ATP binding"/>
    <property type="evidence" value="ECO:0007669"/>
    <property type="project" value="UniProtKB-KW"/>
</dbReference>
<dbReference type="GO" id="GO:0004683">
    <property type="term" value="F:calcium/calmodulin-dependent protein kinase activity"/>
    <property type="evidence" value="ECO:0007669"/>
    <property type="project" value="Ensembl"/>
</dbReference>
<dbReference type="GO" id="GO:0005516">
    <property type="term" value="F:calmodulin binding"/>
    <property type="evidence" value="ECO:0007669"/>
    <property type="project" value="UniProtKB-KW"/>
</dbReference>
<dbReference type="GO" id="GO:0008440">
    <property type="term" value="F:inositol-1,4,5-trisphosphate 3-kinase activity"/>
    <property type="evidence" value="ECO:0000250"/>
    <property type="project" value="UniProtKB"/>
</dbReference>
<dbReference type="GO" id="GO:0031267">
    <property type="term" value="F:small GTPase binding"/>
    <property type="evidence" value="ECO:0000266"/>
    <property type="project" value="MGI"/>
</dbReference>
<dbReference type="GO" id="GO:0030036">
    <property type="term" value="P:actin cytoskeleton organization"/>
    <property type="evidence" value="ECO:0000266"/>
    <property type="project" value="MGI"/>
</dbReference>
<dbReference type="GO" id="GO:0071277">
    <property type="term" value="P:cellular response to calcium ion"/>
    <property type="evidence" value="ECO:0000250"/>
    <property type="project" value="UniProtKB"/>
</dbReference>
<dbReference type="GO" id="GO:0097062">
    <property type="term" value="P:dendritic spine maintenance"/>
    <property type="evidence" value="ECO:0000266"/>
    <property type="project" value="MGI"/>
</dbReference>
<dbReference type="GO" id="GO:0006020">
    <property type="term" value="P:inositol metabolic process"/>
    <property type="evidence" value="ECO:0000315"/>
    <property type="project" value="MGI"/>
</dbReference>
<dbReference type="GO" id="GO:0032958">
    <property type="term" value="P:inositol phosphate biosynthetic process"/>
    <property type="evidence" value="ECO:0007669"/>
    <property type="project" value="InterPro"/>
</dbReference>
<dbReference type="GO" id="GO:0098885">
    <property type="term" value="P:modification of postsynaptic actin cytoskeleton"/>
    <property type="evidence" value="ECO:0007669"/>
    <property type="project" value="Ensembl"/>
</dbReference>
<dbReference type="GO" id="GO:0046854">
    <property type="term" value="P:phosphatidylinositol phosphate biosynthetic process"/>
    <property type="evidence" value="ECO:0000250"/>
    <property type="project" value="UniProtKB"/>
</dbReference>
<dbReference type="GO" id="GO:0061003">
    <property type="term" value="P:positive regulation of dendritic spine morphogenesis"/>
    <property type="evidence" value="ECO:0000266"/>
    <property type="project" value="MGI"/>
</dbReference>
<dbReference type="GO" id="GO:0048167">
    <property type="term" value="P:regulation of synaptic plasticity"/>
    <property type="evidence" value="ECO:0000315"/>
    <property type="project" value="MGI"/>
</dbReference>
<dbReference type="GO" id="GO:0051592">
    <property type="term" value="P:response to calcium ion"/>
    <property type="evidence" value="ECO:0000250"/>
    <property type="project" value="UniProtKB"/>
</dbReference>
<dbReference type="FunFam" id="3.30.470.160:FF:000001">
    <property type="entry name" value="Kinase"/>
    <property type="match status" value="1"/>
</dbReference>
<dbReference type="Gene3D" id="3.30.470.160">
    <property type="entry name" value="Inositol polyphosphate kinase"/>
    <property type="match status" value="1"/>
</dbReference>
<dbReference type="InterPro" id="IPR005522">
    <property type="entry name" value="IPK"/>
</dbReference>
<dbReference type="InterPro" id="IPR038286">
    <property type="entry name" value="IPK_sf"/>
</dbReference>
<dbReference type="PANTHER" id="PTHR12400">
    <property type="entry name" value="INOSITOL POLYPHOSPHATE KINASE"/>
    <property type="match status" value="1"/>
</dbReference>
<dbReference type="PANTHER" id="PTHR12400:SF55">
    <property type="entry name" value="INOSITOL-TRISPHOSPHATE 3-KINASE A"/>
    <property type="match status" value="1"/>
</dbReference>
<dbReference type="Pfam" id="PF03770">
    <property type="entry name" value="IPK"/>
    <property type="match status" value="1"/>
</dbReference>
<dbReference type="SUPFAM" id="SSF56104">
    <property type="entry name" value="SAICAR synthase-like"/>
    <property type="match status" value="1"/>
</dbReference>
<feature type="chain" id="PRO_0000066866" description="Inositol-trisphosphate 3-kinase A">
    <location>
        <begin position="1"/>
        <end position="459"/>
    </location>
</feature>
<feature type="region of interest" description="Disordered" evidence="3">
    <location>
        <begin position="1"/>
        <end position="29"/>
    </location>
</feature>
<feature type="region of interest" description="Disordered" evidence="3">
    <location>
        <begin position="49"/>
        <end position="164"/>
    </location>
</feature>
<feature type="region of interest" description="Calmodulin-binding" evidence="1">
    <location>
        <begin position="285"/>
        <end position="293"/>
    </location>
</feature>
<feature type="compositionally biased region" description="Low complexity" evidence="3">
    <location>
        <begin position="116"/>
        <end position="132"/>
    </location>
</feature>
<feature type="binding site" evidence="1">
    <location>
        <position position="195"/>
    </location>
    <ligand>
        <name>ATP</name>
        <dbReference type="ChEBI" id="CHEBI:30616"/>
    </ligand>
</feature>
<feature type="binding site" evidence="1">
    <location>
        <position position="207"/>
    </location>
    <ligand>
        <name>ATP</name>
        <dbReference type="ChEBI" id="CHEBI:30616"/>
    </ligand>
</feature>
<feature type="binding site" evidence="1">
    <location>
        <begin position="247"/>
        <end position="249"/>
    </location>
    <ligand>
        <name>ATP</name>
        <dbReference type="ChEBI" id="CHEBI:30616"/>
    </ligand>
</feature>
<feature type="binding site" evidence="1">
    <location>
        <position position="260"/>
    </location>
    <ligand>
        <name>ATP</name>
        <dbReference type="ChEBI" id="CHEBI:30616"/>
    </ligand>
</feature>
<feature type="binding site" evidence="1">
    <location>
        <position position="262"/>
    </location>
    <ligand>
        <name>substrate</name>
    </ligand>
</feature>
<feature type="binding site" evidence="1">
    <location>
        <position position="283"/>
    </location>
    <ligand>
        <name>substrate</name>
    </ligand>
</feature>
<feature type="binding site" evidence="1">
    <location>
        <begin position="310"/>
        <end position="317"/>
    </location>
    <ligand>
        <name>substrate</name>
    </ligand>
</feature>
<feature type="binding site" evidence="1">
    <location>
        <position position="334"/>
    </location>
    <ligand>
        <name>ATP</name>
        <dbReference type="ChEBI" id="CHEBI:30616"/>
    </ligand>
</feature>
<feature type="binding site" evidence="1">
    <location>
        <position position="414"/>
    </location>
    <ligand>
        <name>ATP</name>
        <dbReference type="ChEBI" id="CHEBI:30616"/>
    </ligand>
</feature>
<feature type="binding site" evidence="1">
    <location>
        <position position="417"/>
    </location>
    <ligand>
        <name>substrate</name>
    </ligand>
</feature>
<feature type="modified residue" description="Omega-N-methylarginine" evidence="7">
    <location>
        <position position="35"/>
    </location>
</feature>
<feature type="modified residue" description="Omega-N-methylarginine" evidence="7">
    <location>
        <position position="55"/>
    </location>
</feature>
<feature type="modified residue" description="Omega-N-methylarginine" evidence="7">
    <location>
        <position position="62"/>
    </location>
</feature>
<feature type="modified residue" description="Phosphoserine" evidence="6">
    <location>
        <position position="135"/>
    </location>
</feature>
<feature type="modified residue" description="Phosphoserine" evidence="2">
    <location>
        <position position="195"/>
    </location>
</feature>
<sequence length="459" mass="50935">MTLPGRPTGMARPRGAGPCSPGLERAPRRSVGELRLLFEARCAAVAAAAAAGEPRARGAKRRGGQVPNGLPRAAPAPVIPQLTVTSEEDVTPASPGPPDQEGNWLPAAGSHLQQPRRLSTSSLSSTGSSSLLEDSEDDLLSDSESRSRGNVQLETSEDVGQKSHWQKIRTMVNLPVMSPFRKRYSWVQLAGHTGSFKAAGTSGLILKRSSEPEHYCLVRLMADVLRGCVPAFHGIVERDGESYLQLQDLLDGFDGPCVLDCKMGVRTYLEEELTKARERPKLRKDMYKKMLAVDPEAPTEEEHAQRAVTKPRYMQWREGISSSTTLGFRIEGIKKADGSCSTDFKTTRSREQVTRVFEEFMQGDAEVLRRYLNRLQQIRDTLEISDFFRRHEVIGSSLLFVHDHCHRAGVWLIDFGKTTPLPDGQILDHRRPWEEGNREDGYLLGLDNLIGILASLAER</sequence>
<reference key="1">
    <citation type="journal article" date="2009" name="PLoS Biol.">
        <title>Lineage-specific biology revealed by a finished genome assembly of the mouse.</title>
        <authorList>
            <person name="Church D.M."/>
            <person name="Goodstadt L."/>
            <person name="Hillier L.W."/>
            <person name="Zody M.C."/>
            <person name="Goldstein S."/>
            <person name="She X."/>
            <person name="Bult C.J."/>
            <person name="Agarwala R."/>
            <person name="Cherry J.L."/>
            <person name="DiCuccio M."/>
            <person name="Hlavina W."/>
            <person name="Kapustin Y."/>
            <person name="Meric P."/>
            <person name="Maglott D."/>
            <person name="Birtle Z."/>
            <person name="Marques A.C."/>
            <person name="Graves T."/>
            <person name="Zhou S."/>
            <person name="Teague B."/>
            <person name="Potamousis K."/>
            <person name="Churas C."/>
            <person name="Place M."/>
            <person name="Herschleb J."/>
            <person name="Runnheim R."/>
            <person name="Forrest D."/>
            <person name="Amos-Landgraf J."/>
            <person name="Schwartz D.C."/>
            <person name="Cheng Z."/>
            <person name="Lindblad-Toh K."/>
            <person name="Eichler E.E."/>
            <person name="Ponting C.P."/>
        </authorList>
    </citation>
    <scope>NUCLEOTIDE SEQUENCE [LARGE SCALE GENOMIC DNA]</scope>
    <source>
        <strain>C57BL/6J</strain>
    </source>
</reference>
<reference key="2">
    <citation type="journal article" date="2004" name="Genome Res.">
        <title>The status, quality, and expansion of the NIH full-length cDNA project: the Mammalian Gene Collection (MGC).</title>
        <authorList>
            <consortium name="The MGC Project Team"/>
        </authorList>
    </citation>
    <scope>NUCLEOTIDE SEQUENCE [LARGE SCALE MRNA]</scope>
    <source>
        <strain>FVB/N</strain>
        <tissue>Mammary tumor</tissue>
    </source>
</reference>
<reference key="3">
    <citation type="journal article" date="2010" name="Cell">
        <title>A tissue-specific atlas of mouse protein phosphorylation and expression.</title>
        <authorList>
            <person name="Huttlin E.L."/>
            <person name="Jedrychowski M.P."/>
            <person name="Elias J.E."/>
            <person name="Goswami T."/>
            <person name="Rad R."/>
            <person name="Beausoleil S.A."/>
            <person name="Villen J."/>
            <person name="Haas W."/>
            <person name="Sowa M.E."/>
            <person name="Gygi S.P."/>
        </authorList>
    </citation>
    <scope>PHOSPHORYLATION [LARGE SCALE ANALYSIS] AT SER-135</scope>
    <scope>IDENTIFICATION BY MASS SPECTROMETRY [LARGE SCALE ANALYSIS]</scope>
    <source>
        <tissue>Brain</tissue>
        <tissue>Brown adipose tissue</tissue>
        <tissue>Testis</tissue>
    </source>
</reference>
<reference key="4">
    <citation type="journal article" date="2014" name="Mol. Cell. Proteomics">
        <title>Immunoaffinity enrichment and mass spectrometry analysis of protein methylation.</title>
        <authorList>
            <person name="Guo A."/>
            <person name="Gu H."/>
            <person name="Zhou J."/>
            <person name="Mulhern D."/>
            <person name="Wang Y."/>
            <person name="Lee K.A."/>
            <person name="Yang V."/>
            <person name="Aguiar M."/>
            <person name="Kornhauser J."/>
            <person name="Jia X."/>
            <person name="Ren J."/>
            <person name="Beausoleil S.A."/>
            <person name="Silva J.C."/>
            <person name="Vemulapalli V."/>
            <person name="Bedford M.T."/>
            <person name="Comb M.J."/>
        </authorList>
    </citation>
    <scope>METHYLATION [LARGE SCALE ANALYSIS] AT ARG-35; ARG-55 AND ARG-62</scope>
    <scope>IDENTIFICATION BY MASS SPECTROMETRY [LARGE SCALE ANALYSIS]</scope>
    <source>
        <tissue>Brain</tissue>
    </source>
</reference>
<organism>
    <name type="scientific">Mus musculus</name>
    <name type="common">Mouse</name>
    <dbReference type="NCBI Taxonomy" id="10090"/>
    <lineage>
        <taxon>Eukaryota</taxon>
        <taxon>Metazoa</taxon>
        <taxon>Chordata</taxon>
        <taxon>Craniata</taxon>
        <taxon>Vertebrata</taxon>
        <taxon>Euteleostomi</taxon>
        <taxon>Mammalia</taxon>
        <taxon>Eutheria</taxon>
        <taxon>Euarchontoglires</taxon>
        <taxon>Glires</taxon>
        <taxon>Rodentia</taxon>
        <taxon>Myomorpha</taxon>
        <taxon>Muroidea</taxon>
        <taxon>Muridae</taxon>
        <taxon>Murinae</taxon>
        <taxon>Mus</taxon>
        <taxon>Mus</taxon>
    </lineage>
</organism>
<accession>Q8R071</accession>
<accession>A2AQ20</accession>
<proteinExistence type="evidence at protein level"/>
<name>IP3KA_MOUSE</name>
<keyword id="KW-0067">ATP-binding</keyword>
<keyword id="KW-0112">Calmodulin-binding</keyword>
<keyword id="KW-0963">Cytoplasm</keyword>
<keyword id="KW-0206">Cytoskeleton</keyword>
<keyword id="KW-0418">Kinase</keyword>
<keyword id="KW-0488">Methylation</keyword>
<keyword id="KW-0547">Nucleotide-binding</keyword>
<keyword id="KW-0597">Phosphoprotein</keyword>
<keyword id="KW-1185">Reference proteome</keyword>
<keyword id="KW-0808">Transferase</keyword>